<gene>
    <name type="primary">GEP5</name>
    <name type="synonym">RRG5</name>
    <name type="ordered locus">CAGL0L12320g</name>
</gene>
<comment type="function">
    <text evidence="1">Essential for respiratory growth and required for maintenance of mtDNA. Required for cell survival in the absence of prohibitins (By similarity).</text>
</comment>
<comment type="subcellular location">
    <subcellularLocation>
        <location evidence="1">Mitochondrion</location>
    </subcellularLocation>
</comment>
<comment type="similarity">
    <text evidence="2">Belongs to the GEP5 family.</text>
</comment>
<accession>Q6FKE0</accession>
<evidence type="ECO:0000250" key="1"/>
<evidence type="ECO:0000305" key="2"/>
<dbReference type="EMBL" id="CR380958">
    <property type="protein sequence ID" value="CAG62278.1"/>
    <property type="molecule type" value="Genomic_DNA"/>
</dbReference>
<dbReference type="RefSeq" id="XP_449304.1">
    <property type="nucleotide sequence ID" value="XM_449304.1"/>
</dbReference>
<dbReference type="SMR" id="Q6FKE0"/>
<dbReference type="EnsemblFungi" id="CAGL0L12320g-T">
    <property type="protein sequence ID" value="CAGL0L12320g-T-p1"/>
    <property type="gene ID" value="CAGL0L12320g"/>
</dbReference>
<dbReference type="KEGG" id="cgr:2890694"/>
<dbReference type="CGD" id="CAL0136046">
    <property type="gene designation" value="CAGL0L12320g"/>
</dbReference>
<dbReference type="VEuPathDB" id="FungiDB:CAGL0L12320g"/>
<dbReference type="HOGENOM" id="CLU_1001149_0_0_1"/>
<dbReference type="InParanoid" id="Q6FKE0"/>
<dbReference type="Proteomes" id="UP000002428">
    <property type="component" value="Chromosome L"/>
</dbReference>
<dbReference type="GO" id="GO:0005739">
    <property type="term" value="C:mitochondrion"/>
    <property type="evidence" value="ECO:0007669"/>
    <property type="project" value="UniProtKB-SubCell"/>
</dbReference>
<protein>
    <recommendedName>
        <fullName>Genetic interactor of prohibitin 5, mitochondrial</fullName>
    </recommendedName>
    <alternativeName>
        <fullName>Required for respiratory growth protein 5</fullName>
    </alternativeName>
</protein>
<feature type="chain" id="PRO_0000399684" description="Genetic interactor of prohibitin 5, mitochondrial">
    <location>
        <begin position="1"/>
        <end position="278"/>
    </location>
</feature>
<proteinExistence type="inferred from homology"/>
<sequence>MSGRVLEVFRGLPLLPLSHEIVARCWDRMVRQRDVYYQFAVHVSHCHERLSTRNLLRLVTHVHHVLAPMNELPAHLRQYQSEYHALVASWPTVTERQILDAMELGKGMAVRIPHNKTLRQMFEQHEWLVQQRLLDDKRLKRRRLLRCEVQMATPTTNGSTNGNTNGSEISFRQCPLTIRELTPLGALESEAKFKNRVRSDVHSLWRLLAVQHPPLSRPHADELVRTLKRTLGTSRTDRSIARAYLQLLQRAYTYTYTYTDTEAEAQLQYSRVSQLVSH</sequence>
<reference key="1">
    <citation type="journal article" date="2004" name="Nature">
        <title>Genome evolution in yeasts.</title>
        <authorList>
            <person name="Dujon B."/>
            <person name="Sherman D."/>
            <person name="Fischer G."/>
            <person name="Durrens P."/>
            <person name="Casaregola S."/>
            <person name="Lafontaine I."/>
            <person name="de Montigny J."/>
            <person name="Marck C."/>
            <person name="Neuveglise C."/>
            <person name="Talla E."/>
            <person name="Goffard N."/>
            <person name="Frangeul L."/>
            <person name="Aigle M."/>
            <person name="Anthouard V."/>
            <person name="Babour A."/>
            <person name="Barbe V."/>
            <person name="Barnay S."/>
            <person name="Blanchin S."/>
            <person name="Beckerich J.-M."/>
            <person name="Beyne E."/>
            <person name="Bleykasten C."/>
            <person name="Boisrame A."/>
            <person name="Boyer J."/>
            <person name="Cattolico L."/>
            <person name="Confanioleri F."/>
            <person name="de Daruvar A."/>
            <person name="Despons L."/>
            <person name="Fabre E."/>
            <person name="Fairhead C."/>
            <person name="Ferry-Dumazet H."/>
            <person name="Groppi A."/>
            <person name="Hantraye F."/>
            <person name="Hennequin C."/>
            <person name="Jauniaux N."/>
            <person name="Joyet P."/>
            <person name="Kachouri R."/>
            <person name="Kerrest A."/>
            <person name="Koszul R."/>
            <person name="Lemaire M."/>
            <person name="Lesur I."/>
            <person name="Ma L."/>
            <person name="Muller H."/>
            <person name="Nicaud J.-M."/>
            <person name="Nikolski M."/>
            <person name="Oztas S."/>
            <person name="Ozier-Kalogeropoulos O."/>
            <person name="Pellenz S."/>
            <person name="Potier S."/>
            <person name="Richard G.-F."/>
            <person name="Straub M.-L."/>
            <person name="Suleau A."/>
            <person name="Swennen D."/>
            <person name="Tekaia F."/>
            <person name="Wesolowski-Louvel M."/>
            <person name="Westhof E."/>
            <person name="Wirth B."/>
            <person name="Zeniou-Meyer M."/>
            <person name="Zivanovic Y."/>
            <person name="Bolotin-Fukuhara M."/>
            <person name="Thierry A."/>
            <person name="Bouchier C."/>
            <person name="Caudron B."/>
            <person name="Scarpelli C."/>
            <person name="Gaillardin C."/>
            <person name="Weissenbach J."/>
            <person name="Wincker P."/>
            <person name="Souciet J.-L."/>
        </authorList>
    </citation>
    <scope>NUCLEOTIDE SEQUENCE [LARGE SCALE GENOMIC DNA]</scope>
    <source>
        <strain>ATCC 2001 / BCRC 20586 / JCM 3761 / NBRC 0622 / NRRL Y-65 / CBS 138</strain>
    </source>
</reference>
<organism>
    <name type="scientific">Candida glabrata (strain ATCC 2001 / BCRC 20586 / JCM 3761 / NBRC 0622 / NRRL Y-65 / CBS 138)</name>
    <name type="common">Yeast</name>
    <name type="synonym">Nakaseomyces glabratus</name>
    <dbReference type="NCBI Taxonomy" id="284593"/>
    <lineage>
        <taxon>Eukaryota</taxon>
        <taxon>Fungi</taxon>
        <taxon>Dikarya</taxon>
        <taxon>Ascomycota</taxon>
        <taxon>Saccharomycotina</taxon>
        <taxon>Saccharomycetes</taxon>
        <taxon>Saccharomycetales</taxon>
        <taxon>Saccharomycetaceae</taxon>
        <taxon>Nakaseomyces</taxon>
    </lineage>
</organism>
<keyword id="KW-0496">Mitochondrion</keyword>
<keyword id="KW-1185">Reference proteome</keyword>
<name>GEP5_CANGA</name>